<evidence type="ECO:0000255" key="1"/>
<evidence type="ECO:0000255" key="2">
    <source>
        <dbReference type="PROSITE-ProRule" id="PRU00114"/>
    </source>
</evidence>
<evidence type="ECO:0000255" key="3">
    <source>
        <dbReference type="PROSITE-ProRule" id="PRU00498"/>
    </source>
</evidence>
<evidence type="ECO:0000303" key="4">
    <source>
    </source>
</evidence>
<evidence type="ECO:0000303" key="5">
    <source>
    </source>
</evidence>
<evidence type="ECO:0000303" key="6">
    <source>
    </source>
</evidence>
<evidence type="ECO:0000303" key="7">
    <source>
    </source>
</evidence>
<evidence type="ECO:0000303" key="8">
    <source>
    </source>
</evidence>
<evidence type="ECO:0000303" key="9">
    <source ref="2"/>
</evidence>
<evidence type="ECO:0000305" key="10"/>
<evidence type="ECO:0000312" key="11">
    <source>
        <dbReference type="HGNC" id="HGNC:12289"/>
    </source>
</evidence>
<evidence type="ECO:0007829" key="12">
    <source>
        <dbReference type="PDB" id="7RYL"/>
    </source>
</evidence>
<evidence type="ECO:0007829" key="13">
    <source>
        <dbReference type="PDB" id="7RYN"/>
    </source>
</evidence>
<name>TRGV4_HUMAN</name>
<gene>
    <name evidence="9" type="primary">TRGV4</name>
    <name evidence="11" type="synonym">TCRGV4</name>
</gene>
<reference key="1">
    <citation type="journal article" date="2003" name="Nature">
        <title>The DNA sequence of human chromosome 7.</title>
        <authorList>
            <person name="Hillier L.W."/>
            <person name="Fulton R.S."/>
            <person name="Fulton L.A."/>
            <person name="Graves T.A."/>
            <person name="Pepin K.H."/>
            <person name="Wagner-McPherson C."/>
            <person name="Layman D."/>
            <person name="Maas J."/>
            <person name="Jaeger S."/>
            <person name="Walker R."/>
            <person name="Wylie K."/>
            <person name="Sekhon M."/>
            <person name="Becker M.C."/>
            <person name="O'Laughlin M.D."/>
            <person name="Schaller M.E."/>
            <person name="Fewell G.A."/>
            <person name="Delehaunty K.D."/>
            <person name="Miner T.L."/>
            <person name="Nash W.E."/>
            <person name="Cordes M."/>
            <person name="Du H."/>
            <person name="Sun H."/>
            <person name="Edwards J."/>
            <person name="Bradshaw-Cordum H."/>
            <person name="Ali J."/>
            <person name="Andrews S."/>
            <person name="Isak A."/>
            <person name="Vanbrunt A."/>
            <person name="Nguyen C."/>
            <person name="Du F."/>
            <person name="Lamar B."/>
            <person name="Courtney L."/>
            <person name="Kalicki J."/>
            <person name="Ozersky P."/>
            <person name="Bielicki L."/>
            <person name="Scott K."/>
            <person name="Holmes A."/>
            <person name="Harkins R."/>
            <person name="Harris A."/>
            <person name="Strong C.M."/>
            <person name="Hou S."/>
            <person name="Tomlinson C."/>
            <person name="Dauphin-Kohlberg S."/>
            <person name="Kozlowicz-Reilly A."/>
            <person name="Leonard S."/>
            <person name="Rohlfing T."/>
            <person name="Rock S.M."/>
            <person name="Tin-Wollam A.-M."/>
            <person name="Abbott A."/>
            <person name="Minx P."/>
            <person name="Maupin R."/>
            <person name="Strowmatt C."/>
            <person name="Latreille P."/>
            <person name="Miller N."/>
            <person name="Johnson D."/>
            <person name="Murray J."/>
            <person name="Woessner J.P."/>
            <person name="Wendl M.C."/>
            <person name="Yang S.-P."/>
            <person name="Schultz B.R."/>
            <person name="Wallis J.W."/>
            <person name="Spieth J."/>
            <person name="Bieri T.A."/>
            <person name="Nelson J.O."/>
            <person name="Berkowicz N."/>
            <person name="Wohldmann P.E."/>
            <person name="Cook L.L."/>
            <person name="Hickenbotham M.T."/>
            <person name="Eldred J."/>
            <person name="Williams D."/>
            <person name="Bedell J.A."/>
            <person name="Mardis E.R."/>
            <person name="Clifton S.W."/>
            <person name="Chissoe S.L."/>
            <person name="Marra M.A."/>
            <person name="Raymond C."/>
            <person name="Haugen E."/>
            <person name="Gillett W."/>
            <person name="Zhou Y."/>
            <person name="James R."/>
            <person name="Phelps K."/>
            <person name="Iadanoto S."/>
            <person name="Bubb K."/>
            <person name="Simms E."/>
            <person name="Levy R."/>
            <person name="Clendenning J."/>
            <person name="Kaul R."/>
            <person name="Kent W.J."/>
            <person name="Furey T.S."/>
            <person name="Baertsch R.A."/>
            <person name="Brent M.R."/>
            <person name="Keibler E."/>
            <person name="Flicek P."/>
            <person name="Bork P."/>
            <person name="Suyama M."/>
            <person name="Bailey J.A."/>
            <person name="Portnoy M.E."/>
            <person name="Torrents D."/>
            <person name="Chinwalla A.T."/>
            <person name="Gish W.R."/>
            <person name="Eddy S.R."/>
            <person name="McPherson J.D."/>
            <person name="Olson M.V."/>
            <person name="Eichler E.E."/>
            <person name="Green E.D."/>
            <person name="Waterston R.H."/>
            <person name="Wilson R.K."/>
        </authorList>
    </citation>
    <scope>NUCLEOTIDE SEQUENCE [LARGE SCALE GENOMIC DNA] (IMGT ALLELE TRGV4*02)</scope>
</reference>
<reference key="2">
    <citation type="book" date="2001" name="The T Cell Receptor FactsBook.">
        <title>The T Cell Receptor FactsBook.</title>
        <editorList>
            <person name="Lefranc M.P."/>
            <person name="Lefranc G."/>
        </editorList>
        <authorList>
            <person name="Lefranc M.P."/>
            <person name="Lefranc G."/>
        </authorList>
    </citation>
    <scope>NOMENCLATURE</scope>
</reference>
<reference key="3">
    <citation type="journal article" date="2013" name="Nat. Rev. Immunol.">
        <title>Six-of-the-best: unique contributions of gammadelta T cells to immunology.</title>
        <authorList>
            <person name="Vantourout P."/>
            <person name="Hayday A."/>
        </authorList>
    </citation>
    <scope>REVIEW ON FUNCTION AND ANTIGEN RECOGNITION</scope>
</reference>
<reference key="4">
    <citation type="journal article" date="2014" name="Annu. Rev. Immunol.">
        <title>gammadelta T cells: first line of defense and beyond.</title>
        <authorList>
            <person name="Chien Y.H."/>
            <person name="Meyer C."/>
            <person name="Bonneville M."/>
        </authorList>
    </citation>
    <scope>REVIEW ON GAMMA DELTA T CELL RECEPTOR DIVERSITY</scope>
</reference>
<reference key="5">
    <citation type="journal article" date="2014" name="Front. Immunol.">
        <title>Immunoglobulin and T Cell Receptor Genes: IMGT((R)) and the Birth and Rise of Immunoinformatics.</title>
        <authorList>
            <person name="Lefranc M.P."/>
        </authorList>
    </citation>
    <scope>NOMENCLATURE</scope>
</reference>
<reference key="6">
    <citation type="journal article" date="2015" name="Front. Immunol.">
        <title>Five Layers of Receptor Signaling in gammadelta T-Cell Differentiation and Activation.</title>
        <authorList>
            <person name="Ribeiro S.T."/>
            <person name="Ribot J.C."/>
            <person name="Silva-Santos B."/>
        </authorList>
    </citation>
    <scope>REVIEW ON T CELL RECEPTOR SIGNALING</scope>
    <scope>SUBUNIT</scope>
</reference>
<reference key="7">
    <citation type="journal article" date="2017" name="Nat. Rev. Immunol.">
        <title>gammadelta T cells in homeostasis and host defence of epithelial barrier tissues.</title>
        <authorList>
            <person name="Nielsen M.M."/>
            <person name="Witherden D.A."/>
            <person name="Havran W.L."/>
        </authorList>
    </citation>
    <scope>REVIEW ON FUNCTION</scope>
</reference>
<accession>A0A0C4DH28</accession>
<feature type="signal peptide" evidence="1">
    <location>
        <begin position="1"/>
        <end position="17"/>
    </location>
</feature>
<feature type="chain" id="PRO_5002178540" description="T cell receptor gamma variable 4" evidence="1">
    <location>
        <begin position="18"/>
        <end position="118"/>
    </location>
</feature>
<feature type="domain" description="Ig-like" evidence="2">
    <location>
        <begin position="18"/>
        <end position="118" status="greater than"/>
    </location>
</feature>
<feature type="glycosylation site" description="N-linked (GlcNAc...) asparagine" evidence="3">
    <location>
        <position position="106"/>
    </location>
</feature>
<feature type="disulfide bond" evidence="2">
    <location>
        <begin position="41"/>
        <end position="113"/>
    </location>
</feature>
<feature type="non-terminal residue">
    <location>
        <position position="118"/>
    </location>
</feature>
<feature type="strand" evidence="12">
    <location>
        <begin position="28"/>
        <end position="32"/>
    </location>
</feature>
<feature type="strand" evidence="12">
    <location>
        <begin position="37"/>
        <end position="39"/>
    </location>
</feature>
<feature type="strand" evidence="12">
    <location>
        <begin position="51"/>
        <end position="56"/>
    </location>
</feature>
<feature type="strand" evidence="12">
    <location>
        <begin position="63"/>
        <end position="69"/>
    </location>
</feature>
<feature type="turn" evidence="12">
    <location>
        <begin position="70"/>
        <end position="73"/>
    </location>
</feature>
<feature type="strand" evidence="12">
    <location>
        <begin position="74"/>
        <end position="77"/>
    </location>
</feature>
<feature type="strand" evidence="12">
    <location>
        <begin position="85"/>
        <end position="87"/>
    </location>
</feature>
<feature type="strand" evidence="13">
    <location>
        <begin position="92"/>
        <end position="94"/>
    </location>
</feature>
<feature type="strand" evidence="12">
    <location>
        <begin position="98"/>
        <end position="100"/>
    </location>
</feature>
<feature type="helix" evidence="12">
    <location>
        <begin position="105"/>
        <end position="107"/>
    </location>
</feature>
<feature type="strand" evidence="12">
    <location>
        <begin position="109"/>
        <end position="116"/>
    </location>
</feature>
<dbReference type="EMBL" id="AC007245">
    <property type="status" value="NOT_ANNOTATED_CDS"/>
    <property type="molecule type" value="Genomic_DNA"/>
</dbReference>
<dbReference type="PDB" id="7RYL">
    <property type="method" value="X-ray"/>
    <property type="resolution" value="2.00 A"/>
    <property type="chains" value="C=19-118"/>
</dbReference>
<dbReference type="PDB" id="7RYM">
    <property type="method" value="X-ray"/>
    <property type="resolution" value="3.20 A"/>
    <property type="chains" value="C=19-118"/>
</dbReference>
<dbReference type="PDB" id="7RYN">
    <property type="method" value="X-ray"/>
    <property type="resolution" value="2.70 A"/>
    <property type="chains" value="C=19-118"/>
</dbReference>
<dbReference type="PDB" id="7RYO">
    <property type="method" value="X-ray"/>
    <property type="resolution" value="3.00 A"/>
    <property type="chains" value="C=19-118"/>
</dbReference>
<dbReference type="PDBsum" id="7RYL"/>
<dbReference type="PDBsum" id="7RYM"/>
<dbReference type="PDBsum" id="7RYN"/>
<dbReference type="PDBsum" id="7RYO"/>
<dbReference type="SMR" id="A0A0C4DH28"/>
<dbReference type="FunCoup" id="A0A0C4DH28">
    <property type="interactions" value="310"/>
</dbReference>
<dbReference type="IMGT_GENE-DB" id="TRGV4"/>
<dbReference type="GlyCosmos" id="A0A0C4DH28">
    <property type="glycosylation" value="1 site, No reported glycans"/>
</dbReference>
<dbReference type="GlyGen" id="A0A0C4DH28">
    <property type="glycosylation" value="1 site"/>
</dbReference>
<dbReference type="BioMuta" id="TRGV4"/>
<dbReference type="Ensembl" id="ENST00000390345.2">
    <property type="protein sequence ID" value="ENSP00000374868.2"/>
    <property type="gene ID" value="ENSG00000211698.2"/>
</dbReference>
<dbReference type="AGR" id="HGNC:12289"/>
<dbReference type="GeneCards" id="TRGV4"/>
<dbReference type="HGNC" id="HGNC:12289">
    <property type="gene designation" value="TRGV4"/>
</dbReference>
<dbReference type="HPA" id="ENSG00000211698">
    <property type="expression patterns" value="Tissue enhanced (lymphoid)"/>
</dbReference>
<dbReference type="neXtProt" id="NX_A0A0C4DH28"/>
<dbReference type="OpenTargets" id="ENSG00000211698"/>
<dbReference type="VEuPathDB" id="HostDB:ENSG00000211698"/>
<dbReference type="GeneTree" id="ENSGT00940000153143"/>
<dbReference type="HOGENOM" id="CLU_077975_7_1_1"/>
<dbReference type="InParanoid" id="A0A0C4DH28"/>
<dbReference type="OMA" id="CAAWEKH"/>
<dbReference type="OrthoDB" id="9628507at2759"/>
<dbReference type="PAN-GO" id="A0A0C4DH28">
    <property type="GO annotations" value="1 GO annotation based on evolutionary models"/>
</dbReference>
<dbReference type="PhylomeDB" id="A0A0C4DH28"/>
<dbReference type="SignaLink" id="A0A0C4DH28"/>
<dbReference type="PRO" id="PR:A0A0C4DH28"/>
<dbReference type="Proteomes" id="UP000005640">
    <property type="component" value="Chromosome 7"/>
</dbReference>
<dbReference type="RNAct" id="A0A0C4DH28">
    <property type="molecule type" value="protein"/>
</dbReference>
<dbReference type="Bgee" id="ENSG00000211698">
    <property type="expression patterns" value="Expressed in granulocyte and 84 other cell types or tissues"/>
</dbReference>
<dbReference type="GO" id="GO:0009897">
    <property type="term" value="C:external side of plasma membrane"/>
    <property type="evidence" value="ECO:0000318"/>
    <property type="project" value="GO_Central"/>
</dbReference>
<dbReference type="GO" id="GO:0042101">
    <property type="term" value="C:T cell receptor complex"/>
    <property type="evidence" value="ECO:0007669"/>
    <property type="project" value="UniProtKB-KW"/>
</dbReference>
<dbReference type="GO" id="GO:0002250">
    <property type="term" value="P:adaptive immune response"/>
    <property type="evidence" value="ECO:0007669"/>
    <property type="project" value="UniProtKB-KW"/>
</dbReference>
<dbReference type="GO" id="GO:0045087">
    <property type="term" value="P:innate immune response"/>
    <property type="evidence" value="ECO:0007669"/>
    <property type="project" value="UniProtKB-KW"/>
</dbReference>
<dbReference type="FunFam" id="2.60.40.10:FF:001866">
    <property type="entry name" value="T cell receptor gamma variable 3"/>
    <property type="match status" value="1"/>
</dbReference>
<dbReference type="Gene3D" id="2.60.40.10">
    <property type="entry name" value="Immunoglobulins"/>
    <property type="match status" value="1"/>
</dbReference>
<dbReference type="InterPro" id="IPR007110">
    <property type="entry name" value="Ig-like_dom"/>
</dbReference>
<dbReference type="InterPro" id="IPR036179">
    <property type="entry name" value="Ig-like_dom_sf"/>
</dbReference>
<dbReference type="InterPro" id="IPR013783">
    <property type="entry name" value="Ig-like_fold"/>
</dbReference>
<dbReference type="InterPro" id="IPR013106">
    <property type="entry name" value="Ig_V-set"/>
</dbReference>
<dbReference type="InterPro" id="IPR051117">
    <property type="entry name" value="TRG_var/const_region"/>
</dbReference>
<dbReference type="PANTHER" id="PTHR19256:SF67">
    <property type="entry name" value="T CELL RECEPTOR GAMMA VARIABLE 2-RELATED"/>
    <property type="match status" value="1"/>
</dbReference>
<dbReference type="PANTHER" id="PTHR19256">
    <property type="entry name" value="T-CELL RECEPTOR GAMMA CHAIN"/>
    <property type="match status" value="1"/>
</dbReference>
<dbReference type="Pfam" id="PF07686">
    <property type="entry name" value="V-set"/>
    <property type="match status" value="1"/>
</dbReference>
<dbReference type="SMART" id="SM00406">
    <property type="entry name" value="IGv"/>
    <property type="match status" value="1"/>
</dbReference>
<dbReference type="SUPFAM" id="SSF48726">
    <property type="entry name" value="Immunoglobulin"/>
    <property type="match status" value="1"/>
</dbReference>
<dbReference type="PROSITE" id="PS50835">
    <property type="entry name" value="IG_LIKE"/>
    <property type="match status" value="1"/>
</dbReference>
<organism>
    <name type="scientific">Homo sapiens</name>
    <name type="common">Human</name>
    <dbReference type="NCBI Taxonomy" id="9606"/>
    <lineage>
        <taxon>Eukaryota</taxon>
        <taxon>Metazoa</taxon>
        <taxon>Chordata</taxon>
        <taxon>Craniata</taxon>
        <taxon>Vertebrata</taxon>
        <taxon>Euteleostomi</taxon>
        <taxon>Mammalia</taxon>
        <taxon>Eutheria</taxon>
        <taxon>Euarchontoglires</taxon>
        <taxon>Primates</taxon>
        <taxon>Haplorrhini</taxon>
        <taxon>Catarrhini</taxon>
        <taxon>Hominidae</taxon>
        <taxon>Homo</taxon>
    </lineage>
</organism>
<sequence>MQWALAVLLAFLSPASQKSSNLEGRTKSVIRQTGSSAEITCDLAEGSTGYIHWYLHQEGKAPQRLLYYDSYTSSVVLESGISPGKYDTYGSTRKNLRMILRNLIENDSGVYYCATWDG</sequence>
<proteinExistence type="evidence at protein level"/>
<keyword id="KW-0002">3D-structure</keyword>
<keyword id="KW-1064">Adaptive immunity</keyword>
<keyword id="KW-1003">Cell membrane</keyword>
<keyword id="KW-1015">Disulfide bond</keyword>
<keyword id="KW-0325">Glycoprotein</keyword>
<keyword id="KW-0391">Immunity</keyword>
<keyword id="KW-0393">Immunoglobulin domain</keyword>
<keyword id="KW-0399">Innate immunity</keyword>
<keyword id="KW-0472">Membrane</keyword>
<keyword id="KW-0675">Receptor</keyword>
<keyword id="KW-1185">Reference proteome</keyword>
<keyword id="KW-0732">Signal</keyword>
<keyword id="KW-1279">T cell receptor</keyword>
<comment type="function">
    <text evidence="4 5 6 7 8">V region of the variable domain of T cell receptor (TR) gamma chain that participates in the antigen recognition (PubMed:24600447). Gamma-delta TRs recognize a variety of self and foreign non-peptide antigens frequently expressed at the epithelial boundaries between the host and external environment, including endogenous lipids presented by MH-like protein CD1D and phosphoantigens presented by butyrophilin-like molecule BTN3A1. Upon antigen recognition induces rapid, innate-like immune responses involved in pathogen clearance and tissue repair (PubMed:23348415, PubMed:28920588). Binding of gamma-delta TR complex to antigen triggers phosphorylation of immunoreceptor tyrosine-based activation motifs (ITAMs) in the CD3 chains by the LCK and FYN kinases, allowing the recruitment, phosphorylation, and activation of ZAP70 that facilitates phosphorylation of the scaffolding proteins LCP2 and LAT. This lead to the formation of a supramolecular signalosome that recruits the phospholipase PLCG1, resulting in calcium mobilization and ERK activation, ultimately leading to T cell expansion and differentiation into effector cells (PubMed:25674089). Gamma-delta TRs are produced through somatic rearrangement of a limited repertoire of variable (V), diversity (D), and joining (J) genes. The potential diversity of gamma-delta TRs is conferred by the unique ability to rearrange (D) genes in tandem and to utilize all three reading frames. The combinatorial diversity is considerably increased by the sequence exonuclease trimming and random nucleotide (N) region additions which occur during the V-(D)-J rearrangements (PubMed:24387714).</text>
</comment>
<comment type="subunit">
    <text evidence="7">Gamma-delta TR is a heterodimer composed of a gamma and delta chain; disulfide-linked. The gamma-delta TR is associated with the transmembrane signaling CD3 coreceptor proteins following the stoichiometry: a single gamma-delta TR heterodimer associates with one CD3D-CD3E heterodimer, one CD3G-CD3E heterodimer and one CD247 homodimer forming a stable octameric structure. Upon activation, gamma-delta TR complex associates with FCER1G to initiate intracellular signaling.</text>
</comment>
<comment type="subcellular location">
    <subcellularLocation>
        <location evidence="10">Cell membrane</location>
    </subcellularLocation>
</comment>
<comment type="polymorphism">
    <text evidence="10">There are several alleles. The sequence shown is that of IMGT allele TRGV4*02.</text>
</comment>
<protein>
    <recommendedName>
        <fullName evidence="9">T cell receptor gamma variable 4</fullName>
    </recommendedName>
</protein>